<gene>
    <name evidence="1" type="primary">gatC</name>
    <name type="ordered locus">DvMF_2837</name>
</gene>
<evidence type="ECO:0000255" key="1">
    <source>
        <dbReference type="HAMAP-Rule" id="MF_00122"/>
    </source>
</evidence>
<comment type="function">
    <text evidence="1">Allows the formation of correctly charged Asn-tRNA(Asn) or Gln-tRNA(Gln) through the transamidation of misacylated Asp-tRNA(Asn) or Glu-tRNA(Gln) in organisms which lack either or both of asparaginyl-tRNA or glutaminyl-tRNA synthetases. The reaction takes place in the presence of glutamine and ATP through an activated phospho-Asp-tRNA(Asn) or phospho-Glu-tRNA(Gln).</text>
</comment>
<comment type="catalytic activity">
    <reaction evidence="1">
        <text>L-glutamyl-tRNA(Gln) + L-glutamine + ATP + H2O = L-glutaminyl-tRNA(Gln) + L-glutamate + ADP + phosphate + H(+)</text>
        <dbReference type="Rhea" id="RHEA:17521"/>
        <dbReference type="Rhea" id="RHEA-COMP:9681"/>
        <dbReference type="Rhea" id="RHEA-COMP:9684"/>
        <dbReference type="ChEBI" id="CHEBI:15377"/>
        <dbReference type="ChEBI" id="CHEBI:15378"/>
        <dbReference type="ChEBI" id="CHEBI:29985"/>
        <dbReference type="ChEBI" id="CHEBI:30616"/>
        <dbReference type="ChEBI" id="CHEBI:43474"/>
        <dbReference type="ChEBI" id="CHEBI:58359"/>
        <dbReference type="ChEBI" id="CHEBI:78520"/>
        <dbReference type="ChEBI" id="CHEBI:78521"/>
        <dbReference type="ChEBI" id="CHEBI:456216"/>
    </reaction>
</comment>
<comment type="catalytic activity">
    <reaction evidence="1">
        <text>L-aspartyl-tRNA(Asn) + L-glutamine + ATP + H2O = L-asparaginyl-tRNA(Asn) + L-glutamate + ADP + phosphate + 2 H(+)</text>
        <dbReference type="Rhea" id="RHEA:14513"/>
        <dbReference type="Rhea" id="RHEA-COMP:9674"/>
        <dbReference type="Rhea" id="RHEA-COMP:9677"/>
        <dbReference type="ChEBI" id="CHEBI:15377"/>
        <dbReference type="ChEBI" id="CHEBI:15378"/>
        <dbReference type="ChEBI" id="CHEBI:29985"/>
        <dbReference type="ChEBI" id="CHEBI:30616"/>
        <dbReference type="ChEBI" id="CHEBI:43474"/>
        <dbReference type="ChEBI" id="CHEBI:58359"/>
        <dbReference type="ChEBI" id="CHEBI:78515"/>
        <dbReference type="ChEBI" id="CHEBI:78516"/>
        <dbReference type="ChEBI" id="CHEBI:456216"/>
    </reaction>
</comment>
<comment type="subunit">
    <text evidence="1">Heterotrimer of A, B and C subunits.</text>
</comment>
<comment type="similarity">
    <text evidence="1">Belongs to the GatC family.</text>
</comment>
<keyword id="KW-0067">ATP-binding</keyword>
<keyword id="KW-0436">Ligase</keyword>
<keyword id="KW-0547">Nucleotide-binding</keyword>
<keyword id="KW-0648">Protein biosynthesis</keyword>
<feature type="chain" id="PRO_1000122565" description="Aspartyl/glutamyl-tRNA(Asn/Gln) amidotransferase subunit C">
    <location>
        <begin position="1"/>
        <end position="95"/>
    </location>
</feature>
<protein>
    <recommendedName>
        <fullName evidence="1">Aspartyl/glutamyl-tRNA(Asn/Gln) amidotransferase subunit C</fullName>
        <shortName evidence="1">Asp/Glu-ADT subunit C</shortName>
        <ecNumber evidence="1">6.3.5.-</ecNumber>
    </recommendedName>
</protein>
<sequence length="95" mass="10439">MTTISTDQVAAIARLARLAPDEAQLATFARQFGDILGYMEMLNGLDTTGVEPLYSPVQHATALRSDETAPRCTREDVLRNAPEADSEFFIVPRIV</sequence>
<organism>
    <name type="scientific">Nitratidesulfovibrio vulgaris (strain DSM 19637 / Miyazaki F)</name>
    <name type="common">Desulfovibrio vulgaris</name>
    <dbReference type="NCBI Taxonomy" id="883"/>
    <lineage>
        <taxon>Bacteria</taxon>
        <taxon>Pseudomonadati</taxon>
        <taxon>Thermodesulfobacteriota</taxon>
        <taxon>Desulfovibrionia</taxon>
        <taxon>Desulfovibrionales</taxon>
        <taxon>Desulfovibrionaceae</taxon>
        <taxon>Nitratidesulfovibrio</taxon>
    </lineage>
</organism>
<proteinExistence type="inferred from homology"/>
<accession>B8DRD8</accession>
<reference key="1">
    <citation type="submission" date="2008-10" db="EMBL/GenBank/DDBJ databases">
        <title>Complete sequence of Desulfovibrio vulgaris str. 'Miyazaki F'.</title>
        <authorList>
            <person name="Lucas S."/>
            <person name="Copeland A."/>
            <person name="Lapidus A."/>
            <person name="Glavina del Rio T."/>
            <person name="Dalin E."/>
            <person name="Tice H."/>
            <person name="Bruce D."/>
            <person name="Goodwin L."/>
            <person name="Pitluck S."/>
            <person name="Sims D."/>
            <person name="Brettin T."/>
            <person name="Detter J.C."/>
            <person name="Han C."/>
            <person name="Larimer F."/>
            <person name="Land M."/>
            <person name="Hauser L."/>
            <person name="Kyrpides N."/>
            <person name="Mikhailova N."/>
            <person name="Hazen T.C."/>
            <person name="Richardson P."/>
        </authorList>
    </citation>
    <scope>NUCLEOTIDE SEQUENCE [LARGE SCALE GENOMIC DNA]</scope>
    <source>
        <strain>DSM 19637 / Miyazaki F</strain>
    </source>
</reference>
<dbReference type="EC" id="6.3.5.-" evidence="1"/>
<dbReference type="EMBL" id="CP001197">
    <property type="protein sequence ID" value="ACL09775.1"/>
    <property type="molecule type" value="Genomic_DNA"/>
</dbReference>
<dbReference type="SMR" id="B8DRD8"/>
<dbReference type="STRING" id="883.DvMF_2837"/>
<dbReference type="KEGG" id="dvm:DvMF_2837"/>
<dbReference type="eggNOG" id="COG0721">
    <property type="taxonomic scope" value="Bacteria"/>
</dbReference>
<dbReference type="HOGENOM" id="CLU_105899_1_0_7"/>
<dbReference type="OrthoDB" id="9813938at2"/>
<dbReference type="GO" id="GO:0050566">
    <property type="term" value="F:asparaginyl-tRNA synthase (glutamine-hydrolyzing) activity"/>
    <property type="evidence" value="ECO:0007669"/>
    <property type="project" value="RHEA"/>
</dbReference>
<dbReference type="GO" id="GO:0005524">
    <property type="term" value="F:ATP binding"/>
    <property type="evidence" value="ECO:0007669"/>
    <property type="project" value="UniProtKB-KW"/>
</dbReference>
<dbReference type="GO" id="GO:0050567">
    <property type="term" value="F:glutaminyl-tRNA synthase (glutamine-hydrolyzing) activity"/>
    <property type="evidence" value="ECO:0007669"/>
    <property type="project" value="UniProtKB-UniRule"/>
</dbReference>
<dbReference type="GO" id="GO:0070681">
    <property type="term" value="P:glutaminyl-tRNAGln biosynthesis via transamidation"/>
    <property type="evidence" value="ECO:0007669"/>
    <property type="project" value="TreeGrafter"/>
</dbReference>
<dbReference type="GO" id="GO:0006450">
    <property type="term" value="P:regulation of translational fidelity"/>
    <property type="evidence" value="ECO:0007669"/>
    <property type="project" value="InterPro"/>
</dbReference>
<dbReference type="GO" id="GO:0006412">
    <property type="term" value="P:translation"/>
    <property type="evidence" value="ECO:0007669"/>
    <property type="project" value="UniProtKB-UniRule"/>
</dbReference>
<dbReference type="Gene3D" id="1.10.20.60">
    <property type="entry name" value="Glu-tRNAGln amidotransferase C subunit, N-terminal domain"/>
    <property type="match status" value="1"/>
</dbReference>
<dbReference type="HAMAP" id="MF_00122">
    <property type="entry name" value="GatC"/>
    <property type="match status" value="1"/>
</dbReference>
<dbReference type="InterPro" id="IPR036113">
    <property type="entry name" value="Asp/Glu-ADT_sf_sub_c"/>
</dbReference>
<dbReference type="InterPro" id="IPR003837">
    <property type="entry name" value="GatC"/>
</dbReference>
<dbReference type="NCBIfam" id="TIGR00135">
    <property type="entry name" value="gatC"/>
    <property type="match status" value="1"/>
</dbReference>
<dbReference type="PANTHER" id="PTHR15004">
    <property type="entry name" value="GLUTAMYL-TRNA(GLN) AMIDOTRANSFERASE SUBUNIT C, MITOCHONDRIAL"/>
    <property type="match status" value="1"/>
</dbReference>
<dbReference type="PANTHER" id="PTHR15004:SF0">
    <property type="entry name" value="GLUTAMYL-TRNA(GLN) AMIDOTRANSFERASE SUBUNIT C, MITOCHONDRIAL"/>
    <property type="match status" value="1"/>
</dbReference>
<dbReference type="Pfam" id="PF02686">
    <property type="entry name" value="GatC"/>
    <property type="match status" value="1"/>
</dbReference>
<dbReference type="SUPFAM" id="SSF141000">
    <property type="entry name" value="Glu-tRNAGln amidotransferase C subunit"/>
    <property type="match status" value="1"/>
</dbReference>
<name>GATC_NITV9</name>